<sequence length="493" mass="53022">MTEADYADFLVVGGGTCGCVVAARLSEDPSATVMLLESGSGYRSALELPDVLGDPYRLPVGPASEYTWTYPVELTPRRASTIARGRTLGGSGAVNGAYFMRATRADFENWPSAWRYDDVLPYFKKSETDRDFESEFHGTAGPIPVERRAWDQLHPLSGEFHAAALGAGFPDDVDKNAPDSFGVGRVPLNVADHRRISTAIGYLMPALHRPNLRVESGVNVIRIVFSGTRAVGVDVLDDGNVRRIHADHVIVCSGAVATPHILLNSGVGPAEQLAEQGVSVILDRHGVGQNFVDHPEVLLPYHFSTPRAIRSQTPVLETALNLAELEIRPYTASFTDLVPGVPRMDHGVGVVLMAPRSRGSIELASGDPAGAPRIRYNYVASTHDRAANREGMQIAENLLESIAETGLIDRPVVEYTDEWVESRLGTSLHMSGSCVMGAESDPFAVVDDRCRVIGAQGLSIVDTSILPTIPTRGPHATAVMVAERASAILLGDE</sequence>
<evidence type="ECO:0000250" key="1"/>
<evidence type="ECO:0000250" key="2">
    <source>
        <dbReference type="UniProtKB" id="E4QP00"/>
    </source>
</evidence>
<evidence type="ECO:0000255" key="3"/>
<evidence type="ECO:0000305" key="4"/>
<proteinExistence type="inferred from homology"/>
<keyword id="KW-0274">FAD</keyword>
<keyword id="KW-0285">Flavoprotein</keyword>
<keyword id="KW-0560">Oxidoreductase</keyword>
<accession>P46371</accession>
<name>YTH2_RHOER</name>
<dbReference type="EC" id="1.1.-.-"/>
<dbReference type="EMBL" id="U17129">
    <property type="protein sequence ID" value="AAC77470.1"/>
    <property type="molecule type" value="Genomic_DNA"/>
</dbReference>
<dbReference type="RefSeq" id="WP_182263438.1">
    <property type="nucleotide sequence ID" value="NZ_JABBPH010000001.1"/>
</dbReference>
<dbReference type="SMR" id="P46371"/>
<dbReference type="STRING" id="1833.XU06_08910"/>
<dbReference type="GO" id="GO:0050660">
    <property type="term" value="F:flavin adenine dinucleotide binding"/>
    <property type="evidence" value="ECO:0007669"/>
    <property type="project" value="InterPro"/>
</dbReference>
<dbReference type="GO" id="GO:0016614">
    <property type="term" value="F:oxidoreductase activity, acting on CH-OH group of donors"/>
    <property type="evidence" value="ECO:0007669"/>
    <property type="project" value="InterPro"/>
</dbReference>
<dbReference type="Gene3D" id="3.30.410.40">
    <property type="match status" value="1"/>
</dbReference>
<dbReference type="Gene3D" id="3.50.50.60">
    <property type="entry name" value="FAD/NAD(P)-binding domain"/>
    <property type="match status" value="1"/>
</dbReference>
<dbReference type="InterPro" id="IPR036188">
    <property type="entry name" value="FAD/NAD-bd_sf"/>
</dbReference>
<dbReference type="InterPro" id="IPR023978">
    <property type="entry name" value="GMC_oxidoreductase_bact"/>
</dbReference>
<dbReference type="InterPro" id="IPR012132">
    <property type="entry name" value="GMC_OxRdtase"/>
</dbReference>
<dbReference type="InterPro" id="IPR000172">
    <property type="entry name" value="GMC_OxRdtase_N"/>
</dbReference>
<dbReference type="InterPro" id="IPR007867">
    <property type="entry name" value="GMC_OxRtase_C"/>
</dbReference>
<dbReference type="NCBIfam" id="TIGR03970">
    <property type="entry name" value="Rv0697"/>
    <property type="match status" value="1"/>
</dbReference>
<dbReference type="PANTHER" id="PTHR11552:SF147">
    <property type="entry name" value="CHOLINE DEHYDROGENASE, MITOCHONDRIAL"/>
    <property type="match status" value="1"/>
</dbReference>
<dbReference type="PANTHER" id="PTHR11552">
    <property type="entry name" value="GLUCOSE-METHANOL-CHOLINE GMC OXIDOREDUCTASE"/>
    <property type="match status" value="1"/>
</dbReference>
<dbReference type="Pfam" id="PF05199">
    <property type="entry name" value="GMC_oxred_C"/>
    <property type="match status" value="1"/>
</dbReference>
<dbReference type="Pfam" id="PF00732">
    <property type="entry name" value="GMC_oxred_N"/>
    <property type="match status" value="1"/>
</dbReference>
<dbReference type="PIRSF" id="PIRSF000137">
    <property type="entry name" value="Alcohol_oxidase"/>
    <property type="match status" value="1"/>
</dbReference>
<dbReference type="SUPFAM" id="SSF54373">
    <property type="entry name" value="FAD-linked reductases, C-terminal domain"/>
    <property type="match status" value="1"/>
</dbReference>
<dbReference type="SUPFAM" id="SSF51905">
    <property type="entry name" value="FAD/NAD(P)-binding domain"/>
    <property type="match status" value="1"/>
</dbReference>
<dbReference type="PROSITE" id="PS00623">
    <property type="entry name" value="GMC_OXRED_1"/>
    <property type="match status" value="1"/>
</dbReference>
<dbReference type="PROSITE" id="PS00624">
    <property type="entry name" value="GMC_OXRED_2"/>
    <property type="match status" value="1"/>
</dbReference>
<feature type="chain" id="PRO_0000205619" description="Uncharacterized GMC-type oxidoreductase in thcA 5'region">
    <location>
        <begin position="1"/>
        <end position="493"/>
    </location>
</feature>
<feature type="active site" description="Proton acceptor" evidence="2">
    <location>
        <position position="429"/>
    </location>
</feature>
<feature type="binding site" evidence="3">
    <location>
        <begin position="8"/>
        <end position="37"/>
    </location>
    <ligand>
        <name>FAD</name>
        <dbReference type="ChEBI" id="CHEBI:57692"/>
    </ligand>
</feature>
<protein>
    <recommendedName>
        <fullName>Uncharacterized GMC-type oxidoreductase in thcA 5'region</fullName>
        <ecNumber>1.1.-.-</ecNumber>
    </recommendedName>
    <alternativeName>
        <fullName>ORF2</fullName>
    </alternativeName>
</protein>
<organism>
    <name type="scientific">Rhodococcus erythropolis</name>
    <name type="common">Arthrobacter picolinophilus</name>
    <dbReference type="NCBI Taxonomy" id="1833"/>
    <lineage>
        <taxon>Bacteria</taxon>
        <taxon>Bacillati</taxon>
        <taxon>Actinomycetota</taxon>
        <taxon>Actinomycetes</taxon>
        <taxon>Mycobacteriales</taxon>
        <taxon>Nocardiaceae</taxon>
        <taxon>Rhodococcus</taxon>
        <taxon>Rhodococcus erythropolis group</taxon>
    </lineage>
</organism>
<reference key="1">
    <citation type="journal article" date="1995" name="J. Bacteriol.">
        <title>Degradation of the thiocarbamate herbicide EPTC (S-ethyl dipropylcarbamothioate) and biosafening by Rhodococcus sp. strain NI86/21 involve an inducible cytochrome P-450 system and aldehyde dehydrogenase.</title>
        <authorList>
            <person name="Nagy I."/>
            <person name="Schoofs G."/>
            <person name="Compernolle F."/>
            <person name="Proost P."/>
            <person name="Vanderleyden J."/>
            <person name="de Mot R."/>
        </authorList>
    </citation>
    <scope>NUCLEOTIDE SEQUENCE [GENOMIC DNA]</scope>
    <source>
        <strain>NI86/21</strain>
    </source>
</reference>
<comment type="cofactor">
    <cofactor evidence="1">
        <name>FAD</name>
        <dbReference type="ChEBI" id="CHEBI:57692"/>
    </cofactor>
</comment>
<comment type="similarity">
    <text evidence="4">Belongs to the GMC oxidoreductase family.</text>
</comment>